<comment type="function">
    <text evidence="1">The UvrABC repair system catalyzes the recognition and processing of DNA lesions. A damage recognition complex composed of 2 UvrA and 2 UvrB subunits scans DNA for abnormalities. Upon binding of the UvrA(2)B(2) complex to a putative damaged site, the DNA wraps around one UvrB monomer. DNA wrap is dependent on ATP binding by UvrB and probably causes local melting of the DNA helix, facilitating insertion of UvrB beta-hairpin between the DNA strands. Then UvrB probes one DNA strand for the presence of a lesion. If a lesion is found the UvrA subunits dissociate and the UvrB-DNA preincision complex is formed. This complex is subsequently bound by UvrC and the second UvrB is released. If no lesion is found, the DNA wraps around the other UvrB subunit that will check the other stand for damage.</text>
</comment>
<comment type="subunit">
    <text evidence="1">Forms a heterotetramer with UvrA during the search for lesions. Interacts with UvrC in an incision complex.</text>
</comment>
<comment type="subcellular location">
    <subcellularLocation>
        <location evidence="1">Cytoplasm</location>
    </subcellularLocation>
</comment>
<comment type="domain">
    <text evidence="1">The beta-hairpin motif is involved in DNA binding.</text>
</comment>
<comment type="similarity">
    <text evidence="1">Belongs to the UvrB family.</text>
</comment>
<organism>
    <name type="scientific">Photobacterium profundum (strain SS9)</name>
    <dbReference type="NCBI Taxonomy" id="298386"/>
    <lineage>
        <taxon>Bacteria</taxon>
        <taxon>Pseudomonadati</taxon>
        <taxon>Pseudomonadota</taxon>
        <taxon>Gammaproteobacteria</taxon>
        <taxon>Vibrionales</taxon>
        <taxon>Vibrionaceae</taxon>
        <taxon>Photobacterium</taxon>
    </lineage>
</organism>
<name>UVRB_PHOPR</name>
<sequence>MSKVFSLSSGFSPAGDQPTAINQLLEGLDSGLAHQTLLGVTGSGKTFTIANVIAESNRPTFIMAPNKTLAAQLYGEMKEFFPDNAVEYFVSYYDYYQPEAYVPTTDTFIEKDASVNAHIEQMRLSATKALLERRDVIIIASVSAIYGLGDPDSYLKMMLHVRRGDMLNQRDILRRLAELQYTRNDVSFERGHFRVRGEVIDVFPAESEHDAIRIELFDDEVECINVFDPLTGAVLQKDLPRCTIYPKTHYVTPREKILEAIEKIKDELVVRRKQLMDSNKLVEEQRISQRTQFDIEMMNELGFCSGIENYSRYLSGREEGEPPPTLFDYLPADGLLIIDESHVTVSQIGAMYRGDRSRKENLVEYGFRLPSALDNRPMKFEEFASLAPQTIYVSATPGKYEIEQSGNDIAEQVVRPTGLLDPIIEVRPVATQVDDLLSEIRIREVKGERVLVTTLTKRMSEDLAEYLAEHNVKVRYLHSDIDTVERVEIIRDLRLGVFDVLVGINLLREGLDIPEVSLVAILDADKEGFLRSERSLIQTIGRAARNLEGRAILYGDKITGSMERAIFETNRRREKQALHNKKNGITPQGLNKKVGDILELGKPSSRSRTNKAAQLNRVAESKGTYVNLSPQQLELEIQRLETEMYDLAQNLEFEKAAEARDKIHTLRQQFIMNS</sequence>
<reference key="1">
    <citation type="journal article" date="2005" name="Science">
        <title>Life at depth: Photobacterium profundum genome sequence and expression analysis.</title>
        <authorList>
            <person name="Vezzi A."/>
            <person name="Campanaro S."/>
            <person name="D'Angelo M."/>
            <person name="Simonato F."/>
            <person name="Vitulo N."/>
            <person name="Lauro F.M."/>
            <person name="Cestaro A."/>
            <person name="Malacrida G."/>
            <person name="Simionati B."/>
            <person name="Cannata N."/>
            <person name="Romualdi C."/>
            <person name="Bartlett D.H."/>
            <person name="Valle G."/>
        </authorList>
    </citation>
    <scope>NUCLEOTIDE SEQUENCE [LARGE SCALE GENOMIC DNA]</scope>
    <source>
        <strain>ATCC BAA-1253 / SS9</strain>
    </source>
</reference>
<keyword id="KW-0067">ATP-binding</keyword>
<keyword id="KW-0963">Cytoplasm</keyword>
<keyword id="KW-0227">DNA damage</keyword>
<keyword id="KW-0228">DNA excision</keyword>
<keyword id="KW-0234">DNA repair</keyword>
<keyword id="KW-0267">Excision nuclease</keyword>
<keyword id="KW-0547">Nucleotide-binding</keyword>
<keyword id="KW-1185">Reference proteome</keyword>
<keyword id="KW-0742">SOS response</keyword>
<evidence type="ECO:0000255" key="1">
    <source>
        <dbReference type="HAMAP-Rule" id="MF_00204"/>
    </source>
</evidence>
<gene>
    <name evidence="1" type="primary">uvrB</name>
    <name type="ordered locus">PBPRA1118</name>
</gene>
<protein>
    <recommendedName>
        <fullName evidence="1">UvrABC system protein B</fullName>
        <shortName evidence="1">Protein UvrB</shortName>
    </recommendedName>
    <alternativeName>
        <fullName evidence="1">Excinuclease ABC subunit B</fullName>
    </alternativeName>
</protein>
<accession>Q6LT47</accession>
<proteinExistence type="inferred from homology"/>
<feature type="chain" id="PRO_0000227339" description="UvrABC system protein B">
    <location>
        <begin position="1"/>
        <end position="674"/>
    </location>
</feature>
<feature type="domain" description="Helicase ATP-binding" evidence="1">
    <location>
        <begin position="26"/>
        <end position="414"/>
    </location>
</feature>
<feature type="domain" description="Helicase C-terminal" evidence="1">
    <location>
        <begin position="432"/>
        <end position="586"/>
    </location>
</feature>
<feature type="domain" description="UVR" evidence="1">
    <location>
        <begin position="634"/>
        <end position="669"/>
    </location>
</feature>
<feature type="short sequence motif" description="Beta-hairpin">
    <location>
        <begin position="92"/>
        <end position="115"/>
    </location>
</feature>
<feature type="binding site" evidence="1">
    <location>
        <begin position="39"/>
        <end position="46"/>
    </location>
    <ligand>
        <name>ATP</name>
        <dbReference type="ChEBI" id="CHEBI:30616"/>
    </ligand>
</feature>
<dbReference type="EMBL" id="CR378666">
    <property type="protein sequence ID" value="CAG19529.1"/>
    <property type="molecule type" value="Genomic_DNA"/>
</dbReference>
<dbReference type="RefSeq" id="WP_011217861.1">
    <property type="nucleotide sequence ID" value="NC_006370.1"/>
</dbReference>
<dbReference type="SMR" id="Q6LT47"/>
<dbReference type="STRING" id="298386.PBPRA1118"/>
<dbReference type="KEGG" id="ppr:PBPRA1118"/>
<dbReference type="eggNOG" id="COG0556">
    <property type="taxonomic scope" value="Bacteria"/>
</dbReference>
<dbReference type="HOGENOM" id="CLU_009621_2_1_6"/>
<dbReference type="Proteomes" id="UP000000593">
    <property type="component" value="Chromosome 1"/>
</dbReference>
<dbReference type="GO" id="GO:0005737">
    <property type="term" value="C:cytoplasm"/>
    <property type="evidence" value="ECO:0007669"/>
    <property type="project" value="UniProtKB-SubCell"/>
</dbReference>
<dbReference type="GO" id="GO:0009380">
    <property type="term" value="C:excinuclease repair complex"/>
    <property type="evidence" value="ECO:0007669"/>
    <property type="project" value="InterPro"/>
</dbReference>
<dbReference type="GO" id="GO:0005524">
    <property type="term" value="F:ATP binding"/>
    <property type="evidence" value="ECO:0007669"/>
    <property type="project" value="UniProtKB-UniRule"/>
</dbReference>
<dbReference type="GO" id="GO:0016887">
    <property type="term" value="F:ATP hydrolysis activity"/>
    <property type="evidence" value="ECO:0007669"/>
    <property type="project" value="InterPro"/>
</dbReference>
<dbReference type="GO" id="GO:0003677">
    <property type="term" value="F:DNA binding"/>
    <property type="evidence" value="ECO:0007669"/>
    <property type="project" value="UniProtKB-UniRule"/>
</dbReference>
<dbReference type="GO" id="GO:0009381">
    <property type="term" value="F:excinuclease ABC activity"/>
    <property type="evidence" value="ECO:0007669"/>
    <property type="project" value="UniProtKB-UniRule"/>
</dbReference>
<dbReference type="GO" id="GO:0006289">
    <property type="term" value="P:nucleotide-excision repair"/>
    <property type="evidence" value="ECO:0007669"/>
    <property type="project" value="UniProtKB-UniRule"/>
</dbReference>
<dbReference type="GO" id="GO:0009432">
    <property type="term" value="P:SOS response"/>
    <property type="evidence" value="ECO:0007669"/>
    <property type="project" value="UniProtKB-UniRule"/>
</dbReference>
<dbReference type="CDD" id="cd17916">
    <property type="entry name" value="DEXHc_UvrB"/>
    <property type="match status" value="1"/>
</dbReference>
<dbReference type="CDD" id="cd18790">
    <property type="entry name" value="SF2_C_UvrB"/>
    <property type="match status" value="1"/>
</dbReference>
<dbReference type="FunFam" id="3.40.50.300:FF:000477">
    <property type="entry name" value="UvrABC system protein B"/>
    <property type="match status" value="1"/>
</dbReference>
<dbReference type="Gene3D" id="3.40.50.300">
    <property type="entry name" value="P-loop containing nucleotide triphosphate hydrolases"/>
    <property type="match status" value="3"/>
</dbReference>
<dbReference type="Gene3D" id="4.10.860.10">
    <property type="entry name" value="UVR domain"/>
    <property type="match status" value="1"/>
</dbReference>
<dbReference type="HAMAP" id="MF_00204">
    <property type="entry name" value="UvrB"/>
    <property type="match status" value="1"/>
</dbReference>
<dbReference type="InterPro" id="IPR006935">
    <property type="entry name" value="Helicase/UvrB_N"/>
</dbReference>
<dbReference type="InterPro" id="IPR014001">
    <property type="entry name" value="Helicase_ATP-bd"/>
</dbReference>
<dbReference type="InterPro" id="IPR001650">
    <property type="entry name" value="Helicase_C-like"/>
</dbReference>
<dbReference type="InterPro" id="IPR027417">
    <property type="entry name" value="P-loop_NTPase"/>
</dbReference>
<dbReference type="InterPro" id="IPR001943">
    <property type="entry name" value="UVR_dom"/>
</dbReference>
<dbReference type="InterPro" id="IPR036876">
    <property type="entry name" value="UVR_dom_sf"/>
</dbReference>
<dbReference type="InterPro" id="IPR004807">
    <property type="entry name" value="UvrB"/>
</dbReference>
<dbReference type="InterPro" id="IPR041471">
    <property type="entry name" value="UvrB_inter"/>
</dbReference>
<dbReference type="InterPro" id="IPR024759">
    <property type="entry name" value="UvrB_YAD/RRR_dom"/>
</dbReference>
<dbReference type="NCBIfam" id="NF003673">
    <property type="entry name" value="PRK05298.1"/>
    <property type="match status" value="1"/>
</dbReference>
<dbReference type="NCBIfam" id="TIGR00631">
    <property type="entry name" value="uvrb"/>
    <property type="match status" value="1"/>
</dbReference>
<dbReference type="PANTHER" id="PTHR24029">
    <property type="entry name" value="UVRABC SYSTEM PROTEIN B"/>
    <property type="match status" value="1"/>
</dbReference>
<dbReference type="PANTHER" id="PTHR24029:SF0">
    <property type="entry name" value="UVRABC SYSTEM PROTEIN B"/>
    <property type="match status" value="1"/>
</dbReference>
<dbReference type="Pfam" id="PF00271">
    <property type="entry name" value="Helicase_C"/>
    <property type="match status" value="1"/>
</dbReference>
<dbReference type="Pfam" id="PF04851">
    <property type="entry name" value="ResIII"/>
    <property type="match status" value="1"/>
</dbReference>
<dbReference type="Pfam" id="PF02151">
    <property type="entry name" value="UVR"/>
    <property type="match status" value="1"/>
</dbReference>
<dbReference type="Pfam" id="PF12344">
    <property type="entry name" value="UvrB"/>
    <property type="match status" value="1"/>
</dbReference>
<dbReference type="Pfam" id="PF17757">
    <property type="entry name" value="UvrB_inter"/>
    <property type="match status" value="1"/>
</dbReference>
<dbReference type="SMART" id="SM00487">
    <property type="entry name" value="DEXDc"/>
    <property type="match status" value="1"/>
</dbReference>
<dbReference type="SMART" id="SM00490">
    <property type="entry name" value="HELICc"/>
    <property type="match status" value="1"/>
</dbReference>
<dbReference type="SUPFAM" id="SSF46600">
    <property type="entry name" value="C-terminal UvrC-binding domain of UvrB"/>
    <property type="match status" value="1"/>
</dbReference>
<dbReference type="SUPFAM" id="SSF52540">
    <property type="entry name" value="P-loop containing nucleoside triphosphate hydrolases"/>
    <property type="match status" value="2"/>
</dbReference>
<dbReference type="PROSITE" id="PS51192">
    <property type="entry name" value="HELICASE_ATP_BIND_1"/>
    <property type="match status" value="1"/>
</dbReference>
<dbReference type="PROSITE" id="PS51194">
    <property type="entry name" value="HELICASE_CTER"/>
    <property type="match status" value="1"/>
</dbReference>
<dbReference type="PROSITE" id="PS50151">
    <property type="entry name" value="UVR"/>
    <property type="match status" value="1"/>
</dbReference>